<comment type="cofactor">
    <cofactor evidence="1">
        <name>FAD</name>
        <dbReference type="ChEBI" id="CHEBI:57692"/>
    </cofactor>
</comment>
<comment type="similarity">
    <text evidence="4">Belongs to the GMC oxidoreductase family.</text>
</comment>
<proteinExistence type="inferred from homology"/>
<dbReference type="EC" id="1.-.-.-"/>
<dbReference type="EMBL" id="AY653733">
    <property type="protein sequence ID" value="AAV50403.1"/>
    <property type="molecule type" value="Genomic_DNA"/>
</dbReference>
<dbReference type="SMR" id="Q5UPK7"/>
<dbReference type="KEGG" id="vg:9924727"/>
<dbReference type="OrthoDB" id="29600at10239"/>
<dbReference type="Proteomes" id="UP000001134">
    <property type="component" value="Genome"/>
</dbReference>
<dbReference type="GO" id="GO:0050660">
    <property type="term" value="F:flavin adenine dinucleotide binding"/>
    <property type="evidence" value="ECO:0007669"/>
    <property type="project" value="InterPro"/>
</dbReference>
<dbReference type="GO" id="GO:0016614">
    <property type="term" value="F:oxidoreductase activity, acting on CH-OH group of donors"/>
    <property type="evidence" value="ECO:0007669"/>
    <property type="project" value="InterPro"/>
</dbReference>
<dbReference type="Gene3D" id="3.30.410.40">
    <property type="match status" value="1"/>
</dbReference>
<dbReference type="Gene3D" id="3.50.50.60">
    <property type="entry name" value="FAD/NAD(P)-binding domain"/>
    <property type="match status" value="1"/>
</dbReference>
<dbReference type="InterPro" id="IPR036188">
    <property type="entry name" value="FAD/NAD-bd_sf"/>
</dbReference>
<dbReference type="InterPro" id="IPR012132">
    <property type="entry name" value="GMC_OxRdtase"/>
</dbReference>
<dbReference type="InterPro" id="IPR000172">
    <property type="entry name" value="GMC_OxRdtase_N"/>
</dbReference>
<dbReference type="InterPro" id="IPR007867">
    <property type="entry name" value="GMC_OxRtase_C"/>
</dbReference>
<dbReference type="PANTHER" id="PTHR11552:SF147">
    <property type="entry name" value="CHOLINE DEHYDROGENASE, MITOCHONDRIAL"/>
    <property type="match status" value="1"/>
</dbReference>
<dbReference type="PANTHER" id="PTHR11552">
    <property type="entry name" value="GLUCOSE-METHANOL-CHOLINE GMC OXIDOREDUCTASE"/>
    <property type="match status" value="1"/>
</dbReference>
<dbReference type="Pfam" id="PF05199">
    <property type="entry name" value="GMC_oxred_C"/>
    <property type="match status" value="1"/>
</dbReference>
<dbReference type="Pfam" id="PF00732">
    <property type="entry name" value="GMC_oxred_N"/>
    <property type="match status" value="1"/>
</dbReference>
<dbReference type="PIRSF" id="PIRSF000137">
    <property type="entry name" value="Alcohol_oxidase"/>
    <property type="match status" value="1"/>
</dbReference>
<dbReference type="SUPFAM" id="SSF54373">
    <property type="entry name" value="FAD-linked reductases, C-terminal domain"/>
    <property type="match status" value="1"/>
</dbReference>
<dbReference type="SUPFAM" id="SSF51905">
    <property type="entry name" value="FAD/NAD(P)-binding domain"/>
    <property type="match status" value="1"/>
</dbReference>
<dbReference type="PROSITE" id="PS00624">
    <property type="entry name" value="GMC_OXRED_2"/>
    <property type="match status" value="1"/>
</dbReference>
<organism>
    <name type="scientific">Acanthamoeba polyphaga mimivirus</name>
    <name type="common">APMV</name>
    <dbReference type="NCBI Taxonomy" id="212035"/>
    <lineage>
        <taxon>Viruses</taxon>
        <taxon>Varidnaviria</taxon>
        <taxon>Bamfordvirae</taxon>
        <taxon>Nucleocytoviricota</taxon>
        <taxon>Megaviricetes</taxon>
        <taxon>Imitervirales</taxon>
        <taxon>Mimiviridae</taxon>
        <taxon>Megamimivirinae</taxon>
        <taxon>Mimivirus</taxon>
        <taxon>Mimivirus bradfordmassiliense</taxon>
    </lineage>
</organism>
<protein>
    <recommendedName>
        <fullName>Putative GMC-type oxidoreductase L128</fullName>
        <ecNumber>1.-.-.-</ecNumber>
    </recommendedName>
</protein>
<reference key="1">
    <citation type="journal article" date="2004" name="Science">
        <title>The 1.2-megabase genome sequence of Mimivirus.</title>
        <authorList>
            <person name="Raoult D."/>
            <person name="Audic S."/>
            <person name="Robert C."/>
            <person name="Abergel C."/>
            <person name="Renesto P."/>
            <person name="Ogata H."/>
            <person name="La Scola B."/>
            <person name="Susan M."/>
            <person name="Claverie J.-M."/>
        </authorList>
    </citation>
    <scope>NUCLEOTIDE SEQUENCE [LARGE SCALE GENOMIC DNA]</scope>
    <source>
        <strain>Rowbotham-Bradford</strain>
    </source>
</reference>
<name>YL128_MIMIV</name>
<keyword id="KW-0274">FAD</keyword>
<keyword id="KW-0285">Flavoprotein</keyword>
<keyword id="KW-0560">Oxidoreductase</keyword>
<keyword id="KW-1185">Reference proteome</keyword>
<keyword id="KW-0732">Signal</keyword>
<gene>
    <name type="ordered locus">MIMI_L128</name>
</gene>
<organismHost>
    <name type="scientific">Acanthamoeba polyphaga</name>
    <name type="common">Amoeba</name>
    <dbReference type="NCBI Taxonomy" id="5757"/>
</organismHost>
<sequence length="563" mass="61626">MTSSIVLKFFLIATLLVIANSLPACHNGQFLKINKGPNCDDAKYENPDYVIVGGGAAGSVLLDKCISYGYKCTLIERGIDYEDEQVVSQPSGSGLVQSSNAVLLTTTYPNSNIFNKTLVITEPNIIGGSTSINGEISVFTDIENFFEEISIPGWSYLDVLPYYLNVTNSVNRPSHQGAVDVTNTLVTDPKYVAFKAAIQQVFPNIHEKLPDMNTASLNGGFPGYGPPETSVKTSFIPIGDTQVPVSGFRESAYRAYIHPIRNHPNVRIMLRSRVDKVAFDKCGETAKKVFVTYQNYQGSDSQCELKAKKGIILSAGALRTPQILMQSGVGPADHLNELGIPVVSDMPDVGQHLDDHPTVVRTFLGIIPDSSISANIDGHAYWNHLDDPNKVPNWSIQISGFYGPNFKNILNVYMDQMSRGWIKLRSTDPADTPIFNLGHFSDLEDVGPASLGFNKTNQVISNLQYIPIPGLTDVVCPSFIPNCQSNLTEYYMAAYYQFGYSGYHYTGTCAFEKVVDPNTGLVYGFDNLYVVDASVFPKAPRGNTQIGTYAISAKLADIIFGCQ</sequence>
<evidence type="ECO:0000250" key="1"/>
<evidence type="ECO:0000250" key="2">
    <source>
        <dbReference type="UniProtKB" id="E4QP00"/>
    </source>
</evidence>
<evidence type="ECO:0000255" key="3"/>
<evidence type="ECO:0000305" key="4"/>
<accession>Q5UPK7</accession>
<feature type="signal peptide" evidence="3">
    <location>
        <begin position="1"/>
        <end position="21"/>
    </location>
</feature>
<feature type="chain" id="PRO_0000243954" description="Putative GMC-type oxidoreductase L128">
    <location>
        <begin position="22"/>
        <end position="563"/>
    </location>
</feature>
<feature type="active site" description="Proton acceptor" evidence="2">
    <location>
        <position position="504"/>
    </location>
</feature>
<feature type="binding site" evidence="1">
    <location>
        <begin position="48"/>
        <end position="77"/>
    </location>
    <ligand>
        <name>FAD</name>
        <dbReference type="ChEBI" id="CHEBI:57692"/>
    </ligand>
</feature>